<keyword id="KW-0963">Cytoplasm</keyword>
<keyword id="KW-0520">NAD</keyword>
<keyword id="KW-0560">Oxidoreductase</keyword>
<keyword id="KW-0597">Phosphoprotein</keyword>
<keyword id="KW-1185">Reference proteome</keyword>
<proteinExistence type="inferred from homology"/>
<protein>
    <recommendedName>
        <fullName evidence="1">L-lactate dehydrogenase</fullName>
        <shortName evidence="1">L-LDH</shortName>
        <ecNumber evidence="1">1.1.1.27</ecNumber>
    </recommendedName>
</protein>
<dbReference type="EC" id="1.1.1.27" evidence="1"/>
<dbReference type="EMBL" id="BX293980">
    <property type="protein sequence ID" value="CAE77158.1"/>
    <property type="molecule type" value="Genomic_DNA"/>
</dbReference>
<dbReference type="RefSeq" id="NP_975516.1">
    <property type="nucleotide sequence ID" value="NC_005364.2"/>
</dbReference>
<dbReference type="RefSeq" id="WP_011166714.1">
    <property type="nucleotide sequence ID" value="NC_005364.2"/>
</dbReference>
<dbReference type="SMR" id="P62054"/>
<dbReference type="STRING" id="272632.MSC_0532"/>
<dbReference type="KEGG" id="mmy:MSC_0532"/>
<dbReference type="PATRIC" id="fig|272632.4.peg.575"/>
<dbReference type="eggNOG" id="COG0039">
    <property type="taxonomic scope" value="Bacteria"/>
</dbReference>
<dbReference type="HOGENOM" id="CLU_045401_1_1_14"/>
<dbReference type="UniPathway" id="UPA00554">
    <property type="reaction ID" value="UER00611"/>
</dbReference>
<dbReference type="Proteomes" id="UP000001016">
    <property type="component" value="Chromosome"/>
</dbReference>
<dbReference type="GO" id="GO:0005737">
    <property type="term" value="C:cytoplasm"/>
    <property type="evidence" value="ECO:0007669"/>
    <property type="project" value="UniProtKB-SubCell"/>
</dbReference>
<dbReference type="GO" id="GO:0004459">
    <property type="term" value="F:L-lactate dehydrogenase activity"/>
    <property type="evidence" value="ECO:0007669"/>
    <property type="project" value="UniProtKB-UniRule"/>
</dbReference>
<dbReference type="GO" id="GO:0006096">
    <property type="term" value="P:glycolytic process"/>
    <property type="evidence" value="ECO:0007669"/>
    <property type="project" value="UniProtKB-UniRule"/>
</dbReference>
<dbReference type="GO" id="GO:0006089">
    <property type="term" value="P:lactate metabolic process"/>
    <property type="evidence" value="ECO:0007669"/>
    <property type="project" value="TreeGrafter"/>
</dbReference>
<dbReference type="CDD" id="cd05291">
    <property type="entry name" value="HicDH_like"/>
    <property type="match status" value="1"/>
</dbReference>
<dbReference type="FunFam" id="3.40.50.720:FF:000018">
    <property type="entry name" value="Malate dehydrogenase"/>
    <property type="match status" value="1"/>
</dbReference>
<dbReference type="Gene3D" id="3.90.110.10">
    <property type="entry name" value="Lactate dehydrogenase/glycoside hydrolase, family 4, C-terminal"/>
    <property type="match status" value="1"/>
</dbReference>
<dbReference type="Gene3D" id="3.40.50.720">
    <property type="entry name" value="NAD(P)-binding Rossmann-like Domain"/>
    <property type="match status" value="1"/>
</dbReference>
<dbReference type="HAMAP" id="MF_00488">
    <property type="entry name" value="Lactate_dehydrog"/>
    <property type="match status" value="1"/>
</dbReference>
<dbReference type="InterPro" id="IPR001557">
    <property type="entry name" value="L-lactate/malate_DH"/>
</dbReference>
<dbReference type="InterPro" id="IPR011304">
    <property type="entry name" value="L-lactate_DH"/>
</dbReference>
<dbReference type="InterPro" id="IPR018177">
    <property type="entry name" value="L-lactate_DH_AS"/>
</dbReference>
<dbReference type="InterPro" id="IPR022383">
    <property type="entry name" value="Lactate/malate_DH_C"/>
</dbReference>
<dbReference type="InterPro" id="IPR001236">
    <property type="entry name" value="Lactate/malate_DH_N"/>
</dbReference>
<dbReference type="InterPro" id="IPR015955">
    <property type="entry name" value="Lactate_DH/Glyco_Ohase_4_C"/>
</dbReference>
<dbReference type="InterPro" id="IPR036291">
    <property type="entry name" value="NAD(P)-bd_dom_sf"/>
</dbReference>
<dbReference type="NCBIfam" id="TIGR01771">
    <property type="entry name" value="L-LDH-NAD"/>
    <property type="match status" value="1"/>
</dbReference>
<dbReference type="NCBIfam" id="NF000824">
    <property type="entry name" value="PRK00066.1"/>
    <property type="match status" value="1"/>
</dbReference>
<dbReference type="NCBIfam" id="NF004863">
    <property type="entry name" value="PRK06223.1"/>
    <property type="match status" value="1"/>
</dbReference>
<dbReference type="PANTHER" id="PTHR43128">
    <property type="entry name" value="L-2-HYDROXYCARBOXYLATE DEHYDROGENASE (NAD(P)(+))"/>
    <property type="match status" value="1"/>
</dbReference>
<dbReference type="PANTHER" id="PTHR43128:SF16">
    <property type="entry name" value="L-LACTATE DEHYDROGENASE"/>
    <property type="match status" value="1"/>
</dbReference>
<dbReference type="Pfam" id="PF02866">
    <property type="entry name" value="Ldh_1_C"/>
    <property type="match status" value="1"/>
</dbReference>
<dbReference type="Pfam" id="PF00056">
    <property type="entry name" value="Ldh_1_N"/>
    <property type="match status" value="1"/>
</dbReference>
<dbReference type="PIRSF" id="PIRSF000102">
    <property type="entry name" value="Lac_mal_DH"/>
    <property type="match status" value="1"/>
</dbReference>
<dbReference type="PRINTS" id="PR00086">
    <property type="entry name" value="LLDHDRGNASE"/>
</dbReference>
<dbReference type="SUPFAM" id="SSF56327">
    <property type="entry name" value="LDH C-terminal domain-like"/>
    <property type="match status" value="1"/>
</dbReference>
<dbReference type="SUPFAM" id="SSF51735">
    <property type="entry name" value="NAD(P)-binding Rossmann-fold domains"/>
    <property type="match status" value="1"/>
</dbReference>
<dbReference type="PROSITE" id="PS00064">
    <property type="entry name" value="L_LDH"/>
    <property type="match status" value="1"/>
</dbReference>
<sequence>MKKTANKVVLIGAGSVGTSFLYAAINQGIAEHYVLIDAFPQPAEGNALDLSDTLAVIPHSFTSIKAGSYEDCKDADVVVITAGRPQKPGETRLEMVAGNAEIMKNIATEVKKSGFDGITVIASNPVDVITHVYQKVTGFDPHKVIGSGTTLDSARLRRLVGQKLNVKPESVQAYVAGEHGDSSVAIWSQANIMGRPILDYVKCGCLTLEDLDQIQKDTVDMAYKIINLKRATFYGIGACLTKIVNAVLRDEKSTLMVGAQLNGEYKNKDLYTGVPAIIGSNGWERIIEWDLTKEEQEKFDKSCETLHKTIDSVKHLFE</sequence>
<feature type="chain" id="PRO_0000168372" description="L-lactate dehydrogenase">
    <location>
        <begin position="1"/>
        <end position="318"/>
    </location>
</feature>
<feature type="active site" description="Proton acceptor" evidence="1">
    <location>
        <position position="179"/>
    </location>
</feature>
<feature type="binding site" evidence="1">
    <location>
        <position position="16"/>
    </location>
    <ligand>
        <name>NAD(+)</name>
        <dbReference type="ChEBI" id="CHEBI:57540"/>
    </ligand>
</feature>
<feature type="binding site" evidence="1">
    <location>
        <position position="37"/>
    </location>
    <ligand>
        <name>NAD(+)</name>
        <dbReference type="ChEBI" id="CHEBI:57540"/>
    </ligand>
</feature>
<feature type="binding site" evidence="1">
    <location>
        <position position="69"/>
    </location>
    <ligand>
        <name>NAD(+)</name>
        <dbReference type="ChEBI" id="CHEBI:57540"/>
    </ligand>
</feature>
<feature type="binding site" evidence="1">
    <location>
        <position position="86"/>
    </location>
    <ligand>
        <name>substrate</name>
    </ligand>
</feature>
<feature type="binding site" evidence="1">
    <location>
        <position position="92"/>
    </location>
    <ligand>
        <name>substrate</name>
    </ligand>
</feature>
<feature type="binding site" evidence="1">
    <location>
        <begin position="122"/>
        <end position="124"/>
    </location>
    <ligand>
        <name>NAD(+)</name>
        <dbReference type="ChEBI" id="CHEBI:57540"/>
    </ligand>
</feature>
<feature type="binding site" evidence="1">
    <location>
        <begin position="124"/>
        <end position="127"/>
    </location>
    <ligand>
        <name>substrate</name>
    </ligand>
</feature>
<feature type="binding site" evidence="1">
    <location>
        <position position="147"/>
    </location>
    <ligand>
        <name>NAD(+)</name>
        <dbReference type="ChEBI" id="CHEBI:57540"/>
    </ligand>
</feature>
<feature type="binding site" evidence="1">
    <location>
        <begin position="152"/>
        <end position="155"/>
    </location>
    <ligand>
        <name>substrate</name>
    </ligand>
</feature>
<feature type="binding site" evidence="1">
    <location>
        <position position="232"/>
    </location>
    <ligand>
        <name>substrate</name>
    </ligand>
</feature>
<feature type="modified residue" description="Phosphotyrosine" evidence="1">
    <location>
        <position position="223"/>
    </location>
</feature>
<name>LDH_MYCMS</name>
<accession>P62054</accession>
<comment type="function">
    <text evidence="1">Catalyzes the conversion of lactate to pyruvate.</text>
</comment>
<comment type="catalytic activity">
    <reaction evidence="1">
        <text>(S)-lactate + NAD(+) = pyruvate + NADH + H(+)</text>
        <dbReference type="Rhea" id="RHEA:23444"/>
        <dbReference type="ChEBI" id="CHEBI:15361"/>
        <dbReference type="ChEBI" id="CHEBI:15378"/>
        <dbReference type="ChEBI" id="CHEBI:16651"/>
        <dbReference type="ChEBI" id="CHEBI:57540"/>
        <dbReference type="ChEBI" id="CHEBI:57945"/>
        <dbReference type="EC" id="1.1.1.27"/>
    </reaction>
</comment>
<comment type="pathway">
    <text evidence="1">Fermentation; pyruvate fermentation to lactate; (S)-lactate from pyruvate: step 1/1.</text>
</comment>
<comment type="subunit">
    <text evidence="1">Homotetramer.</text>
</comment>
<comment type="subcellular location">
    <subcellularLocation>
        <location evidence="1">Cytoplasm</location>
    </subcellularLocation>
</comment>
<comment type="similarity">
    <text evidence="1">Belongs to the LDH/MDH superfamily. LDH family.</text>
</comment>
<evidence type="ECO:0000255" key="1">
    <source>
        <dbReference type="HAMAP-Rule" id="MF_00488"/>
    </source>
</evidence>
<organism>
    <name type="scientific">Mycoplasma mycoides subsp. mycoides SC (strain CCUG 32753 / NCTC 10114 / PG1)</name>
    <dbReference type="NCBI Taxonomy" id="272632"/>
    <lineage>
        <taxon>Bacteria</taxon>
        <taxon>Bacillati</taxon>
        <taxon>Mycoplasmatota</taxon>
        <taxon>Mollicutes</taxon>
        <taxon>Mycoplasmataceae</taxon>
        <taxon>Mycoplasma</taxon>
    </lineage>
</organism>
<gene>
    <name evidence="1" type="primary">ldh</name>
    <name type="ordered locus">MSC_0532</name>
</gene>
<reference key="1">
    <citation type="journal article" date="2004" name="Genome Res.">
        <title>The genome sequence of Mycoplasma mycoides subsp. mycoides SC type strain PG1T, the causative agent of contagious bovine pleuropneumonia (CBPP).</title>
        <authorList>
            <person name="Westberg J."/>
            <person name="Persson A."/>
            <person name="Holmberg A."/>
            <person name="Goesmann A."/>
            <person name="Lundeberg J."/>
            <person name="Johansson K.-E."/>
            <person name="Pettersson B."/>
            <person name="Uhlen M."/>
        </authorList>
    </citation>
    <scope>NUCLEOTIDE SEQUENCE [LARGE SCALE GENOMIC DNA]</scope>
    <source>
        <strain>CCUG 32753 / NCTC 10114 / PG1</strain>
    </source>
</reference>